<name>SRE29_CAEEL</name>
<gene>
    <name type="primary">sre-29</name>
    <name type="ORF">F57G9.4</name>
</gene>
<accession>O62269</accession>
<protein>
    <recommendedName>
        <fullName>Serpentine receptor class epsilon-29</fullName>
        <shortName>Protein sre-29</shortName>
    </recommendedName>
</protein>
<sequence>MLIKINSNDIWLPIHFYDETFNFQLVLSIVELFSYLICAYILTLNIYIILKIKMFHRNLYILAIPLFGIWFELIIGKLITIAYRLKILNPGFELGVHIEIWTSDPTRKLKVESVNGLELLIFGGFLQWHYMFTIIFGVLAIAVERVVASVLIENYESNTQLFIPLFLTVISQFLSISTSLALLFQKVGPFLAQLPWIICCPFSAMAYFFVKKCNESFEREIRNPRRRRHFSVSQQFQVKENLRALYLGTRLVFVVLSCIALCGIGITALFYDLIPPFCCHFVENFLFLHPYLSCLTAIFSVPQWKNEFREVSVLGRCLKIGRLKIESENAMEIQDSTKKMGTETDLYFQQLADSWI</sequence>
<organism>
    <name type="scientific">Caenorhabditis elegans</name>
    <dbReference type="NCBI Taxonomy" id="6239"/>
    <lineage>
        <taxon>Eukaryota</taxon>
        <taxon>Metazoa</taxon>
        <taxon>Ecdysozoa</taxon>
        <taxon>Nematoda</taxon>
        <taxon>Chromadorea</taxon>
        <taxon>Rhabditida</taxon>
        <taxon>Rhabditina</taxon>
        <taxon>Rhabditomorpha</taxon>
        <taxon>Rhabditoidea</taxon>
        <taxon>Rhabditidae</taxon>
        <taxon>Peloderinae</taxon>
        <taxon>Caenorhabditis</taxon>
    </lineage>
</organism>
<reference key="1">
    <citation type="journal article" date="1998" name="Science">
        <title>Genome sequence of the nematode C. elegans: a platform for investigating biology.</title>
        <authorList>
            <consortium name="The C. elegans sequencing consortium"/>
        </authorList>
    </citation>
    <scope>NUCLEOTIDE SEQUENCE [LARGE SCALE GENOMIC DNA]</scope>
    <source>
        <strain>Bristol N2</strain>
    </source>
</reference>
<keyword id="KW-0472">Membrane</keyword>
<keyword id="KW-1185">Reference proteome</keyword>
<keyword id="KW-0812">Transmembrane</keyword>
<keyword id="KW-1133">Transmembrane helix</keyword>
<dbReference type="EMBL" id="Z83231">
    <property type="protein sequence ID" value="CAB05752.1"/>
    <property type="molecule type" value="Genomic_DNA"/>
</dbReference>
<dbReference type="PIR" id="T22882">
    <property type="entry name" value="T22882"/>
</dbReference>
<dbReference type="RefSeq" id="NP_496631.1">
    <property type="nucleotide sequence ID" value="NM_064230.1"/>
</dbReference>
<dbReference type="SMR" id="O62269"/>
<dbReference type="BioGRID" id="51217">
    <property type="interactions" value="1"/>
</dbReference>
<dbReference type="FunCoup" id="O62269">
    <property type="interactions" value="9"/>
</dbReference>
<dbReference type="PaxDb" id="6239-F57G9.4"/>
<dbReference type="EnsemblMetazoa" id="F57G9.4.1">
    <property type="protein sequence ID" value="F57G9.4.1"/>
    <property type="gene ID" value="WBGene00010220"/>
</dbReference>
<dbReference type="GeneID" id="186477"/>
<dbReference type="KEGG" id="cel:CELE_F57G9.4"/>
<dbReference type="UCSC" id="F57G9.4">
    <property type="organism name" value="c. elegans"/>
</dbReference>
<dbReference type="AGR" id="WB:WBGene00010220"/>
<dbReference type="CTD" id="186477"/>
<dbReference type="WormBase" id="F57G9.4">
    <property type="protein sequence ID" value="CE17920"/>
    <property type="gene ID" value="WBGene00010220"/>
    <property type="gene designation" value="sre-29"/>
</dbReference>
<dbReference type="eggNOG" id="ENOG502TFCH">
    <property type="taxonomic scope" value="Eukaryota"/>
</dbReference>
<dbReference type="GeneTree" id="ENSGT00970000195947"/>
<dbReference type="HOGENOM" id="CLU_063305_1_0_1"/>
<dbReference type="InParanoid" id="O62269"/>
<dbReference type="PhylomeDB" id="O62269"/>
<dbReference type="PRO" id="PR:O62269"/>
<dbReference type="Proteomes" id="UP000001940">
    <property type="component" value="Chromosome II"/>
</dbReference>
<dbReference type="GO" id="GO:0016020">
    <property type="term" value="C:membrane"/>
    <property type="evidence" value="ECO:0007669"/>
    <property type="project" value="UniProtKB-SubCell"/>
</dbReference>
<dbReference type="GO" id="GO:0007606">
    <property type="term" value="P:sensory perception of chemical stimulus"/>
    <property type="evidence" value="ECO:0007669"/>
    <property type="project" value="InterPro"/>
</dbReference>
<dbReference type="InterPro" id="IPR004151">
    <property type="entry name" value="7TM_GPCR_serpentine_rcpt_Sre"/>
</dbReference>
<dbReference type="PANTHER" id="PTHR23128">
    <property type="entry name" value="SERPENTINE RECEPTOR, CLASS E (EPSILON)-RELATED"/>
    <property type="match status" value="1"/>
</dbReference>
<dbReference type="PANTHER" id="PTHR23128:SF60">
    <property type="entry name" value="SERPENTINE RECEPTOR, CLASS E (EPSILON)-RELATED"/>
    <property type="match status" value="1"/>
</dbReference>
<dbReference type="Pfam" id="PF03125">
    <property type="entry name" value="Sre"/>
    <property type="match status" value="1"/>
</dbReference>
<comment type="subcellular location">
    <subcellularLocation>
        <location evidence="2">Membrane</location>
        <topology evidence="2">Multi-pass membrane protein</topology>
    </subcellularLocation>
</comment>
<comment type="similarity">
    <text evidence="2">Belongs to the nematode receptor-like protein sre family.</text>
</comment>
<evidence type="ECO:0000255" key="1"/>
<evidence type="ECO:0000305" key="2"/>
<proteinExistence type="inferred from homology"/>
<feature type="chain" id="PRO_0000104543" description="Serpentine receptor class epsilon-29">
    <location>
        <begin position="1"/>
        <end position="356"/>
    </location>
</feature>
<feature type="transmembrane region" description="Helical" evidence="1">
    <location>
        <begin position="29"/>
        <end position="49"/>
    </location>
</feature>
<feature type="transmembrane region" description="Helical" evidence="1">
    <location>
        <begin position="61"/>
        <end position="81"/>
    </location>
</feature>
<feature type="transmembrane region" description="Helical" evidence="1">
    <location>
        <begin position="119"/>
        <end position="139"/>
    </location>
</feature>
<feature type="transmembrane region" description="Helical" evidence="1">
    <location>
        <begin position="161"/>
        <end position="181"/>
    </location>
</feature>
<feature type="transmembrane region" description="Helical" evidence="1">
    <location>
        <begin position="190"/>
        <end position="210"/>
    </location>
</feature>
<feature type="transmembrane region" description="Helical" evidence="1">
    <location>
        <begin position="251"/>
        <end position="271"/>
    </location>
</feature>
<feature type="transmembrane region" description="Helical" evidence="1">
    <location>
        <begin position="281"/>
        <end position="301"/>
    </location>
</feature>